<dbReference type="EC" id="3.4.21.105" evidence="1"/>
<dbReference type="EMBL" id="CP000668">
    <property type="protein sequence ID" value="ABP38475.1"/>
    <property type="molecule type" value="Genomic_DNA"/>
</dbReference>
<dbReference type="RefSeq" id="WP_002216348.1">
    <property type="nucleotide sequence ID" value="NZ_CP009715.1"/>
</dbReference>
<dbReference type="SMR" id="A4TGR2"/>
<dbReference type="GeneID" id="57974477"/>
<dbReference type="KEGG" id="ypp:YPDSF_0049"/>
<dbReference type="PATRIC" id="fig|386656.14.peg.522"/>
<dbReference type="GO" id="GO:0005886">
    <property type="term" value="C:plasma membrane"/>
    <property type="evidence" value="ECO:0007669"/>
    <property type="project" value="UniProtKB-SubCell"/>
</dbReference>
<dbReference type="GO" id="GO:0004252">
    <property type="term" value="F:serine-type endopeptidase activity"/>
    <property type="evidence" value="ECO:0007669"/>
    <property type="project" value="UniProtKB-UniRule"/>
</dbReference>
<dbReference type="GO" id="GO:0006508">
    <property type="term" value="P:proteolysis"/>
    <property type="evidence" value="ECO:0007669"/>
    <property type="project" value="UniProtKB-UniRule"/>
</dbReference>
<dbReference type="Gene3D" id="3.30.70.2350">
    <property type="match status" value="1"/>
</dbReference>
<dbReference type="Gene3D" id="1.20.1540.10">
    <property type="entry name" value="Rhomboid-like"/>
    <property type="match status" value="1"/>
</dbReference>
<dbReference type="HAMAP" id="MF_01594">
    <property type="entry name" value="Rhomboid_GlpG"/>
    <property type="match status" value="1"/>
</dbReference>
<dbReference type="InterPro" id="IPR038236">
    <property type="entry name" value="GlpG_N_sf"/>
</dbReference>
<dbReference type="InterPro" id="IPR022732">
    <property type="entry name" value="Peptidase_S54_GlpG_N"/>
</dbReference>
<dbReference type="InterPro" id="IPR022764">
    <property type="entry name" value="Peptidase_S54_rhomboid_dom"/>
</dbReference>
<dbReference type="InterPro" id="IPR035952">
    <property type="entry name" value="Rhomboid-like_sf"/>
</dbReference>
<dbReference type="InterPro" id="IPR023662">
    <property type="entry name" value="Rhomboid_protease_GlpG"/>
</dbReference>
<dbReference type="NCBIfam" id="NF008155">
    <property type="entry name" value="PRK10907.1"/>
    <property type="match status" value="1"/>
</dbReference>
<dbReference type="NCBIfam" id="TIGR04239">
    <property type="entry name" value="rhombo_GlpG"/>
    <property type="match status" value="1"/>
</dbReference>
<dbReference type="PANTHER" id="PTHR43066:SF26">
    <property type="entry name" value="RHOMBOID PROTEASE GLPG"/>
    <property type="match status" value="1"/>
</dbReference>
<dbReference type="PANTHER" id="PTHR43066">
    <property type="entry name" value="RHOMBOID-RELATED PROTEIN"/>
    <property type="match status" value="1"/>
</dbReference>
<dbReference type="Pfam" id="PF01694">
    <property type="entry name" value="Rhomboid"/>
    <property type="match status" value="1"/>
</dbReference>
<dbReference type="Pfam" id="PF12122">
    <property type="entry name" value="Rhomboid_N"/>
    <property type="match status" value="1"/>
</dbReference>
<dbReference type="SUPFAM" id="SSF144091">
    <property type="entry name" value="Rhomboid-like"/>
    <property type="match status" value="1"/>
</dbReference>
<evidence type="ECO:0000255" key="1">
    <source>
        <dbReference type="HAMAP-Rule" id="MF_01594"/>
    </source>
</evidence>
<organism>
    <name type="scientific">Yersinia pestis (strain Pestoides F)</name>
    <dbReference type="NCBI Taxonomy" id="386656"/>
    <lineage>
        <taxon>Bacteria</taxon>
        <taxon>Pseudomonadati</taxon>
        <taxon>Pseudomonadota</taxon>
        <taxon>Gammaproteobacteria</taxon>
        <taxon>Enterobacterales</taxon>
        <taxon>Yersiniaceae</taxon>
        <taxon>Yersinia</taxon>
    </lineage>
</organism>
<comment type="function">
    <text evidence="1">Rhomboid-type serine protease that catalyzes intramembrane proteolysis.</text>
</comment>
<comment type="catalytic activity">
    <reaction evidence="1">
        <text>Cleaves type-1 transmembrane domains using a catalytic dyad composed of serine and histidine that are contributed by different transmembrane domains.</text>
        <dbReference type="EC" id="3.4.21.105"/>
    </reaction>
</comment>
<comment type="subcellular location">
    <subcellularLocation>
        <location evidence="1">Cell inner membrane</location>
        <topology evidence="1">Multi-pass membrane protein</topology>
    </subcellularLocation>
</comment>
<comment type="similarity">
    <text evidence="1">Belongs to the peptidase S54 family.</text>
</comment>
<reference key="1">
    <citation type="submission" date="2007-02" db="EMBL/GenBank/DDBJ databases">
        <title>Complete sequence of chromosome of Yersinia pestis Pestoides F.</title>
        <authorList>
            <consortium name="US DOE Joint Genome Institute"/>
            <person name="Copeland A."/>
            <person name="Lucas S."/>
            <person name="Lapidus A."/>
            <person name="Barry K."/>
            <person name="Detter J.C."/>
            <person name="Glavina del Rio T."/>
            <person name="Hammon N."/>
            <person name="Israni S."/>
            <person name="Dalin E."/>
            <person name="Tice H."/>
            <person name="Pitluck S."/>
            <person name="Di Bartolo G."/>
            <person name="Chain P."/>
            <person name="Malfatti S."/>
            <person name="Shin M."/>
            <person name="Vergez L."/>
            <person name="Schmutz J."/>
            <person name="Larimer F."/>
            <person name="Land M."/>
            <person name="Hauser L."/>
            <person name="Worsham P."/>
            <person name="Chu M."/>
            <person name="Bearden S."/>
            <person name="Garcia E."/>
            <person name="Richardson P."/>
        </authorList>
    </citation>
    <scope>NUCLEOTIDE SEQUENCE [LARGE SCALE GENOMIC DNA]</scope>
    <source>
        <strain>Pestoides F</strain>
    </source>
</reference>
<gene>
    <name evidence="1" type="primary">glpG</name>
    <name type="ordered locus">YPDSF_0049</name>
</gene>
<name>GLPG_YERPP</name>
<proteinExistence type="inferred from homology"/>
<sequence>MTRVIVISNLRLAQAFVDYMATHHVALEIRPDAQGVEIWLADDEQLSAVQHELEQFLLDPLNPRYQAASWQAGNVNSNLPYQRFSYLQTLRSQAGPLTLSVMVLCIAIYILMLITGDMAVMSWLAWPYNSSQYLQIWRWVSHAFLHFSLLHILFNLMWWWYLGGQMEKRLGTSKLLVLTIVSAVFSGWGQSLFSGANFGGLSGVVYALMGYVWLTGERAPERGISLPRGLMAFSVLWLIAGYFDILGLSIANAAHVSGLIIGLLMAFWDTRNSARTVQ</sequence>
<feature type="chain" id="PRO_0000321703" description="Rhomboid protease GlpG">
    <location>
        <begin position="1"/>
        <end position="278"/>
    </location>
</feature>
<feature type="transmembrane region" description="Helical" evidence="1">
    <location>
        <begin position="94"/>
        <end position="114"/>
    </location>
</feature>
<feature type="transmembrane region" description="Helical" evidence="1">
    <location>
        <begin position="143"/>
        <end position="163"/>
    </location>
</feature>
<feature type="transmembrane region" description="Helical" evidence="1">
    <location>
        <begin position="175"/>
        <end position="195"/>
    </location>
</feature>
<feature type="transmembrane region" description="Helical" evidence="1">
    <location>
        <begin position="196"/>
        <end position="216"/>
    </location>
</feature>
<feature type="transmembrane region" description="Helical" evidence="1">
    <location>
        <begin position="224"/>
        <end position="241"/>
    </location>
</feature>
<feature type="transmembrane region" description="Helical" evidence="1">
    <location>
        <begin position="245"/>
        <end position="267"/>
    </location>
</feature>
<feature type="active site" description="Nucleophile" evidence="1">
    <location>
        <position position="202"/>
    </location>
</feature>
<feature type="active site" evidence="1">
    <location>
        <position position="255"/>
    </location>
</feature>
<keyword id="KW-0997">Cell inner membrane</keyword>
<keyword id="KW-1003">Cell membrane</keyword>
<keyword id="KW-0378">Hydrolase</keyword>
<keyword id="KW-0472">Membrane</keyword>
<keyword id="KW-0645">Protease</keyword>
<keyword id="KW-0720">Serine protease</keyword>
<keyword id="KW-0812">Transmembrane</keyword>
<keyword id="KW-1133">Transmembrane helix</keyword>
<protein>
    <recommendedName>
        <fullName evidence="1">Rhomboid protease GlpG</fullName>
        <ecNumber evidence="1">3.4.21.105</ecNumber>
    </recommendedName>
    <alternativeName>
        <fullName evidence="1">Intramembrane serine protease</fullName>
    </alternativeName>
</protein>
<accession>A4TGR2</accession>